<name>MIAB_STAAE</name>
<proteinExistence type="inferred from homology"/>
<comment type="function">
    <text evidence="1">Catalyzes the methylthiolation of N6-(dimethylallyl)adenosine (i(6)A), leading to the formation of 2-methylthio-N6-(dimethylallyl)adenosine (ms(2)i(6)A) at position 37 in tRNAs that read codons beginning with uridine.</text>
</comment>
<comment type="catalytic activity">
    <reaction evidence="1">
        <text>N(6)-dimethylallyladenosine(37) in tRNA + (sulfur carrier)-SH + AH2 + 2 S-adenosyl-L-methionine = 2-methylsulfanyl-N(6)-dimethylallyladenosine(37) in tRNA + (sulfur carrier)-H + 5'-deoxyadenosine + L-methionine + A + S-adenosyl-L-homocysteine + 2 H(+)</text>
        <dbReference type="Rhea" id="RHEA:37067"/>
        <dbReference type="Rhea" id="RHEA-COMP:10375"/>
        <dbReference type="Rhea" id="RHEA-COMP:10376"/>
        <dbReference type="Rhea" id="RHEA-COMP:14737"/>
        <dbReference type="Rhea" id="RHEA-COMP:14739"/>
        <dbReference type="ChEBI" id="CHEBI:13193"/>
        <dbReference type="ChEBI" id="CHEBI:15378"/>
        <dbReference type="ChEBI" id="CHEBI:17319"/>
        <dbReference type="ChEBI" id="CHEBI:17499"/>
        <dbReference type="ChEBI" id="CHEBI:29917"/>
        <dbReference type="ChEBI" id="CHEBI:57844"/>
        <dbReference type="ChEBI" id="CHEBI:57856"/>
        <dbReference type="ChEBI" id="CHEBI:59789"/>
        <dbReference type="ChEBI" id="CHEBI:64428"/>
        <dbReference type="ChEBI" id="CHEBI:74415"/>
        <dbReference type="ChEBI" id="CHEBI:74417"/>
        <dbReference type="EC" id="2.8.4.3"/>
    </reaction>
</comment>
<comment type="cofactor">
    <cofactor evidence="1">
        <name>[4Fe-4S] cluster</name>
        <dbReference type="ChEBI" id="CHEBI:49883"/>
    </cofactor>
    <text evidence="1">Binds 2 [4Fe-4S] clusters. One cluster is coordinated with 3 cysteines and an exchangeable S-adenosyl-L-methionine.</text>
</comment>
<comment type="subunit">
    <text evidence="1">Monomer.</text>
</comment>
<comment type="subcellular location">
    <subcellularLocation>
        <location evidence="1">Cytoplasm</location>
    </subcellularLocation>
</comment>
<comment type="similarity">
    <text evidence="1">Belongs to the methylthiotransferase family. MiaB subfamily.</text>
</comment>
<evidence type="ECO:0000255" key="1">
    <source>
        <dbReference type="HAMAP-Rule" id="MF_01864"/>
    </source>
</evidence>
<evidence type="ECO:0000255" key="2">
    <source>
        <dbReference type="PROSITE-ProRule" id="PRU01266"/>
    </source>
</evidence>
<evidence type="ECO:0000256" key="3">
    <source>
        <dbReference type="SAM" id="MobiDB-lite"/>
    </source>
</evidence>
<protein>
    <recommendedName>
        <fullName evidence="1">tRNA-2-methylthio-N(6)-dimethylallyladenosine synthase</fullName>
        <ecNumber evidence="1">2.8.4.3</ecNumber>
    </recommendedName>
    <alternativeName>
        <fullName evidence="1">(Dimethylallyl)adenosine tRNA methylthiotransferase MiaB</fullName>
    </alternativeName>
    <alternativeName>
        <fullName evidence="1">tRNA-i(6)A37 methylthiotransferase</fullName>
    </alternativeName>
</protein>
<dbReference type="EC" id="2.8.4.3" evidence="1"/>
<dbReference type="EMBL" id="AP009351">
    <property type="protein sequence ID" value="BAF67473.1"/>
    <property type="molecule type" value="Genomic_DNA"/>
</dbReference>
<dbReference type="RefSeq" id="WP_001001523.1">
    <property type="nucleotide sequence ID" value="NZ_JBBIAE010000001.1"/>
</dbReference>
<dbReference type="SMR" id="A6QGJ1"/>
<dbReference type="KEGG" id="sae:NWMN_1201"/>
<dbReference type="HOGENOM" id="CLU_018697_2_0_9"/>
<dbReference type="Proteomes" id="UP000006386">
    <property type="component" value="Chromosome"/>
</dbReference>
<dbReference type="GO" id="GO:0005829">
    <property type="term" value="C:cytosol"/>
    <property type="evidence" value="ECO:0007669"/>
    <property type="project" value="TreeGrafter"/>
</dbReference>
<dbReference type="GO" id="GO:0051539">
    <property type="term" value="F:4 iron, 4 sulfur cluster binding"/>
    <property type="evidence" value="ECO:0007669"/>
    <property type="project" value="UniProtKB-UniRule"/>
</dbReference>
<dbReference type="GO" id="GO:0046872">
    <property type="term" value="F:metal ion binding"/>
    <property type="evidence" value="ECO:0007669"/>
    <property type="project" value="UniProtKB-KW"/>
</dbReference>
<dbReference type="GO" id="GO:0035597">
    <property type="term" value="F:N6-isopentenyladenosine methylthiotransferase activity"/>
    <property type="evidence" value="ECO:0007669"/>
    <property type="project" value="TreeGrafter"/>
</dbReference>
<dbReference type="CDD" id="cd01335">
    <property type="entry name" value="Radical_SAM"/>
    <property type="match status" value="1"/>
</dbReference>
<dbReference type="FunFam" id="3.40.50.12160:FF:000006">
    <property type="entry name" value="tRNA-2-methylthio-N(6)-dimethylallyladenosine synthase"/>
    <property type="match status" value="1"/>
</dbReference>
<dbReference type="FunFam" id="3.80.30.20:FF:000001">
    <property type="entry name" value="tRNA-2-methylthio-N(6)-dimethylallyladenosine synthase 2"/>
    <property type="match status" value="1"/>
</dbReference>
<dbReference type="Gene3D" id="3.40.50.12160">
    <property type="entry name" value="Methylthiotransferase, N-terminal domain"/>
    <property type="match status" value="1"/>
</dbReference>
<dbReference type="Gene3D" id="3.80.30.20">
    <property type="entry name" value="tm_1862 like domain"/>
    <property type="match status" value="1"/>
</dbReference>
<dbReference type="HAMAP" id="MF_01864">
    <property type="entry name" value="tRNA_metthiotr_MiaB"/>
    <property type="match status" value="1"/>
</dbReference>
<dbReference type="InterPro" id="IPR006638">
    <property type="entry name" value="Elp3/MiaA/NifB-like_rSAM"/>
</dbReference>
<dbReference type="InterPro" id="IPR005839">
    <property type="entry name" value="Methylthiotransferase"/>
</dbReference>
<dbReference type="InterPro" id="IPR020612">
    <property type="entry name" value="Methylthiotransferase_CS"/>
</dbReference>
<dbReference type="InterPro" id="IPR013848">
    <property type="entry name" value="Methylthiotransferase_N"/>
</dbReference>
<dbReference type="InterPro" id="IPR038135">
    <property type="entry name" value="Methylthiotransferase_N_sf"/>
</dbReference>
<dbReference type="InterPro" id="IPR006463">
    <property type="entry name" value="MiaB_methiolase"/>
</dbReference>
<dbReference type="InterPro" id="IPR007197">
    <property type="entry name" value="rSAM"/>
</dbReference>
<dbReference type="InterPro" id="IPR023404">
    <property type="entry name" value="rSAM_horseshoe"/>
</dbReference>
<dbReference type="InterPro" id="IPR002792">
    <property type="entry name" value="TRAM_dom"/>
</dbReference>
<dbReference type="NCBIfam" id="TIGR01574">
    <property type="entry name" value="miaB-methiolase"/>
    <property type="match status" value="1"/>
</dbReference>
<dbReference type="NCBIfam" id="TIGR00089">
    <property type="entry name" value="MiaB/RimO family radical SAM methylthiotransferase"/>
    <property type="match status" value="1"/>
</dbReference>
<dbReference type="PANTHER" id="PTHR43020">
    <property type="entry name" value="CDK5 REGULATORY SUBUNIT-ASSOCIATED PROTEIN 1"/>
    <property type="match status" value="1"/>
</dbReference>
<dbReference type="PANTHER" id="PTHR43020:SF2">
    <property type="entry name" value="MITOCHONDRIAL TRNA METHYLTHIOTRANSFERASE CDK5RAP1"/>
    <property type="match status" value="1"/>
</dbReference>
<dbReference type="Pfam" id="PF04055">
    <property type="entry name" value="Radical_SAM"/>
    <property type="match status" value="1"/>
</dbReference>
<dbReference type="Pfam" id="PF01938">
    <property type="entry name" value="TRAM"/>
    <property type="match status" value="1"/>
</dbReference>
<dbReference type="Pfam" id="PF00919">
    <property type="entry name" value="UPF0004"/>
    <property type="match status" value="1"/>
</dbReference>
<dbReference type="SFLD" id="SFLDF00273">
    <property type="entry name" value="(dimethylallyl)adenosine_tRNA"/>
    <property type="match status" value="1"/>
</dbReference>
<dbReference type="SFLD" id="SFLDG01082">
    <property type="entry name" value="B12-binding_domain_containing"/>
    <property type="match status" value="1"/>
</dbReference>
<dbReference type="SFLD" id="SFLDS00029">
    <property type="entry name" value="Radical_SAM"/>
    <property type="match status" value="1"/>
</dbReference>
<dbReference type="SMART" id="SM00729">
    <property type="entry name" value="Elp3"/>
    <property type="match status" value="1"/>
</dbReference>
<dbReference type="SUPFAM" id="SSF102114">
    <property type="entry name" value="Radical SAM enzymes"/>
    <property type="match status" value="1"/>
</dbReference>
<dbReference type="PROSITE" id="PS51449">
    <property type="entry name" value="MTTASE_N"/>
    <property type="match status" value="1"/>
</dbReference>
<dbReference type="PROSITE" id="PS01278">
    <property type="entry name" value="MTTASE_RADICAL"/>
    <property type="match status" value="1"/>
</dbReference>
<dbReference type="PROSITE" id="PS51918">
    <property type="entry name" value="RADICAL_SAM"/>
    <property type="match status" value="1"/>
</dbReference>
<dbReference type="PROSITE" id="PS50926">
    <property type="entry name" value="TRAM"/>
    <property type="match status" value="1"/>
</dbReference>
<reference key="1">
    <citation type="journal article" date="2008" name="J. Bacteriol.">
        <title>Genome sequence of Staphylococcus aureus strain Newman and comparative analysis of staphylococcal genomes: polymorphism and evolution of two major pathogenicity islands.</title>
        <authorList>
            <person name="Baba T."/>
            <person name="Bae T."/>
            <person name="Schneewind O."/>
            <person name="Takeuchi F."/>
            <person name="Hiramatsu K."/>
        </authorList>
    </citation>
    <scope>NUCLEOTIDE SEQUENCE [LARGE SCALE GENOMIC DNA]</scope>
    <source>
        <strain>Newman</strain>
    </source>
</reference>
<gene>
    <name evidence="1" type="primary">miaB</name>
    <name type="ordered locus">NWMN_1201</name>
</gene>
<sequence>MNEEQRKASSVDVLAERDKKAEKDYSKYFEHVYQPPNLKEAKKRGKQEVRYNRDFQIDEKYRGMGNERTFLIKTYGCQMNAHDTEVIAGILEALGYQATTDINTADVILINTCAIRENAENKVFSEIGNLKHLKKERPDILIGVCGCMSQEESVVNKILKSYQNVDMIFGTHNIHHLPEILEEAYLSKAMVVEVWSKEGDVIENLPKVREGNIKAWVNIMYGCDKFCTYCIVPFTRGKERSRRPEDIIDEVRELAREGYKEITLLGQNVNSYGKDLQDIEYDLGDLLQAISKIAIPRVRFTTSHPWDFTDHMIDVISEGGNIVPHIHLPVQSGNNAVLKIMGRKYTRESYLDLVKRIKDRIPNVALTTDIIVGYPNESEEQFEETLTLYDEVGFEHAYTYLYSQRDGTPAAKMKDNVPLNVKKERLQRLNKKVGHYSQIAMSKYEGQTVTVLCEGSSKKDDQVLAGYTDKNKLVNFKAPKEMIGKLVEVRIDEAKQYSLNGSFIKEVEPEMVIQ</sequence>
<keyword id="KW-0004">4Fe-4S</keyword>
<keyword id="KW-0963">Cytoplasm</keyword>
<keyword id="KW-0408">Iron</keyword>
<keyword id="KW-0411">Iron-sulfur</keyword>
<keyword id="KW-0479">Metal-binding</keyword>
<keyword id="KW-0949">S-adenosyl-L-methionine</keyword>
<keyword id="KW-0808">Transferase</keyword>
<keyword id="KW-0819">tRNA processing</keyword>
<organism>
    <name type="scientific">Staphylococcus aureus (strain Newman)</name>
    <dbReference type="NCBI Taxonomy" id="426430"/>
    <lineage>
        <taxon>Bacteria</taxon>
        <taxon>Bacillati</taxon>
        <taxon>Bacillota</taxon>
        <taxon>Bacilli</taxon>
        <taxon>Bacillales</taxon>
        <taxon>Staphylococcaceae</taxon>
        <taxon>Staphylococcus</taxon>
    </lineage>
</organism>
<accession>A6QGJ1</accession>
<feature type="chain" id="PRO_0000374575" description="tRNA-2-methylthio-N(6)-dimethylallyladenosine synthase">
    <location>
        <begin position="1"/>
        <end position="514"/>
    </location>
</feature>
<feature type="domain" description="MTTase N-terminal" evidence="1">
    <location>
        <begin position="68"/>
        <end position="186"/>
    </location>
</feature>
<feature type="domain" description="Radical SAM core" evidence="2">
    <location>
        <begin position="209"/>
        <end position="440"/>
    </location>
</feature>
<feature type="domain" description="TRAM" evidence="1">
    <location>
        <begin position="442"/>
        <end position="505"/>
    </location>
</feature>
<feature type="region of interest" description="Disordered" evidence="3">
    <location>
        <begin position="1"/>
        <end position="21"/>
    </location>
</feature>
<feature type="binding site" evidence="1">
    <location>
        <position position="77"/>
    </location>
    <ligand>
        <name>[4Fe-4S] cluster</name>
        <dbReference type="ChEBI" id="CHEBI:49883"/>
        <label>1</label>
    </ligand>
</feature>
<feature type="binding site" evidence="1">
    <location>
        <position position="113"/>
    </location>
    <ligand>
        <name>[4Fe-4S] cluster</name>
        <dbReference type="ChEBI" id="CHEBI:49883"/>
        <label>1</label>
    </ligand>
</feature>
<feature type="binding site" evidence="1">
    <location>
        <position position="147"/>
    </location>
    <ligand>
        <name>[4Fe-4S] cluster</name>
        <dbReference type="ChEBI" id="CHEBI:49883"/>
        <label>1</label>
    </ligand>
</feature>
<feature type="binding site" evidence="1">
    <location>
        <position position="223"/>
    </location>
    <ligand>
        <name>[4Fe-4S] cluster</name>
        <dbReference type="ChEBI" id="CHEBI:49883"/>
        <label>2</label>
        <note>4Fe-4S-S-AdoMet</note>
    </ligand>
</feature>
<feature type="binding site" evidence="1">
    <location>
        <position position="227"/>
    </location>
    <ligand>
        <name>[4Fe-4S] cluster</name>
        <dbReference type="ChEBI" id="CHEBI:49883"/>
        <label>2</label>
        <note>4Fe-4S-S-AdoMet</note>
    </ligand>
</feature>
<feature type="binding site" evidence="1">
    <location>
        <position position="230"/>
    </location>
    <ligand>
        <name>[4Fe-4S] cluster</name>
        <dbReference type="ChEBI" id="CHEBI:49883"/>
        <label>2</label>
        <note>4Fe-4S-S-AdoMet</note>
    </ligand>
</feature>